<gene>
    <name type="primary">hpd</name>
    <name type="ORF">DDB_G0277511</name>
</gene>
<accession>Q76NV5</accession>
<accession>Q1ZXJ9</accession>
<accession>Q54ZM7</accession>
<comment type="function">
    <text evidence="1">Key enzyme in the degradation of tyrosine.</text>
</comment>
<comment type="catalytic activity">
    <reaction>
        <text>3-(4-hydroxyphenyl)pyruvate + O2 = homogentisate + CO2</text>
        <dbReference type="Rhea" id="RHEA:16189"/>
        <dbReference type="ChEBI" id="CHEBI:15379"/>
        <dbReference type="ChEBI" id="CHEBI:16169"/>
        <dbReference type="ChEBI" id="CHEBI:16526"/>
        <dbReference type="ChEBI" id="CHEBI:36242"/>
        <dbReference type="EC" id="1.13.11.27"/>
    </reaction>
</comment>
<comment type="cofactor">
    <cofactor evidence="1">
        <name>Fe cation</name>
        <dbReference type="ChEBI" id="CHEBI:24875"/>
    </cofactor>
    <text evidence="1">Binds 1 Fe cation per subunit.</text>
</comment>
<comment type="pathway">
    <text>Amino-acid degradation; L-phenylalanine degradation; acetoacetate and fumarate from L-phenylalanine: step 3/6.</text>
</comment>
<comment type="alternative products">
    <event type="alternative splicing"/>
    <isoform>
        <id>Q76NV5-1</id>
        <name>1</name>
        <sequence type="displayed"/>
    </isoform>
    <isoform>
        <id>Q76NV5-2</id>
        <name>2</name>
        <sequence type="described" ref="VSP_032743"/>
    </isoform>
</comment>
<comment type="similarity">
    <text evidence="3">Belongs to the 4HPPD family.</text>
</comment>
<keyword id="KW-0025">Alternative splicing</keyword>
<keyword id="KW-0223">Dioxygenase</keyword>
<keyword id="KW-0408">Iron</keyword>
<keyword id="KW-0479">Metal-binding</keyword>
<keyword id="KW-0560">Oxidoreductase</keyword>
<keyword id="KW-0585">Phenylalanine catabolism</keyword>
<keyword id="KW-1185">Reference proteome</keyword>
<keyword id="KW-0677">Repeat</keyword>
<keyword id="KW-0828">Tyrosine catabolism</keyword>
<name>HPPD_DICDI</name>
<feature type="chain" id="PRO_0000327996" description="4-hydroxyphenylpyruvate dioxygenase">
    <location>
        <begin position="1"/>
        <end position="367"/>
    </location>
</feature>
<feature type="domain" description="VOC 1" evidence="2">
    <location>
        <begin position="3"/>
        <end position="135"/>
    </location>
</feature>
<feature type="domain" description="VOC 2" evidence="2">
    <location>
        <begin position="166"/>
        <end position="324"/>
    </location>
</feature>
<feature type="binding site" evidence="1">
    <location>
        <position position="169"/>
    </location>
    <ligand>
        <name>Fe cation</name>
        <dbReference type="ChEBI" id="CHEBI:24875"/>
    </ligand>
</feature>
<feature type="binding site" evidence="1">
    <location>
        <position position="252"/>
    </location>
    <ligand>
        <name>Fe cation</name>
        <dbReference type="ChEBI" id="CHEBI:24875"/>
    </ligand>
</feature>
<feature type="binding site" evidence="1">
    <location>
        <position position="335"/>
    </location>
    <ligand>
        <name>Fe cation</name>
        <dbReference type="ChEBI" id="CHEBI:24875"/>
    </ligand>
</feature>
<feature type="splice variant" id="VSP_032743" description="In isoform 2." evidence="3">
    <original>M</original>
    <variation>MEM</variation>
    <location>
        <position position="1"/>
    </location>
</feature>
<reference key="1">
    <citation type="journal article" date="2002" name="Nature">
        <title>Sequence and analysis of chromosome 2 of Dictyostelium discoideum.</title>
        <authorList>
            <person name="Gloeckner G."/>
            <person name="Eichinger L."/>
            <person name="Szafranski K."/>
            <person name="Pachebat J.A."/>
            <person name="Bankier A.T."/>
            <person name="Dear P.H."/>
            <person name="Lehmann R."/>
            <person name="Baumgart C."/>
            <person name="Parra G."/>
            <person name="Abril J.F."/>
            <person name="Guigo R."/>
            <person name="Kumpf K."/>
            <person name="Tunggal B."/>
            <person name="Cox E.C."/>
            <person name="Quail M.A."/>
            <person name="Platzer M."/>
            <person name="Rosenthal A."/>
            <person name="Noegel A.A."/>
        </authorList>
    </citation>
    <scope>NUCLEOTIDE SEQUENCE [LARGE SCALE GENOMIC DNA]</scope>
    <source>
        <strain>AX4</strain>
    </source>
</reference>
<reference key="2">
    <citation type="journal article" date="2005" name="Nature">
        <title>The genome of the social amoeba Dictyostelium discoideum.</title>
        <authorList>
            <person name="Eichinger L."/>
            <person name="Pachebat J.A."/>
            <person name="Gloeckner G."/>
            <person name="Rajandream M.A."/>
            <person name="Sucgang R."/>
            <person name="Berriman M."/>
            <person name="Song J."/>
            <person name="Olsen R."/>
            <person name="Szafranski K."/>
            <person name="Xu Q."/>
            <person name="Tunggal B."/>
            <person name="Kummerfeld S."/>
            <person name="Madera M."/>
            <person name="Konfortov B.A."/>
            <person name="Rivero F."/>
            <person name="Bankier A.T."/>
            <person name="Lehmann R."/>
            <person name="Hamlin N."/>
            <person name="Davies R."/>
            <person name="Gaudet P."/>
            <person name="Fey P."/>
            <person name="Pilcher K."/>
            <person name="Chen G."/>
            <person name="Saunders D."/>
            <person name="Sodergren E.J."/>
            <person name="Davis P."/>
            <person name="Kerhornou A."/>
            <person name="Nie X."/>
            <person name="Hall N."/>
            <person name="Anjard C."/>
            <person name="Hemphill L."/>
            <person name="Bason N."/>
            <person name="Farbrother P."/>
            <person name="Desany B."/>
            <person name="Just E."/>
            <person name="Morio T."/>
            <person name="Rost R."/>
            <person name="Churcher C.M."/>
            <person name="Cooper J."/>
            <person name="Haydock S."/>
            <person name="van Driessche N."/>
            <person name="Cronin A."/>
            <person name="Goodhead I."/>
            <person name="Muzny D.M."/>
            <person name="Mourier T."/>
            <person name="Pain A."/>
            <person name="Lu M."/>
            <person name="Harper D."/>
            <person name="Lindsay R."/>
            <person name="Hauser H."/>
            <person name="James K.D."/>
            <person name="Quiles M."/>
            <person name="Madan Babu M."/>
            <person name="Saito T."/>
            <person name="Buchrieser C."/>
            <person name="Wardroper A."/>
            <person name="Felder M."/>
            <person name="Thangavelu M."/>
            <person name="Johnson D."/>
            <person name="Knights A."/>
            <person name="Loulseged H."/>
            <person name="Mungall K.L."/>
            <person name="Oliver K."/>
            <person name="Price C."/>
            <person name="Quail M.A."/>
            <person name="Urushihara H."/>
            <person name="Hernandez J."/>
            <person name="Rabbinowitsch E."/>
            <person name="Steffen D."/>
            <person name="Sanders M."/>
            <person name="Ma J."/>
            <person name="Kohara Y."/>
            <person name="Sharp S."/>
            <person name="Simmonds M.N."/>
            <person name="Spiegler S."/>
            <person name="Tivey A."/>
            <person name="Sugano S."/>
            <person name="White B."/>
            <person name="Walker D."/>
            <person name="Woodward J.R."/>
            <person name="Winckler T."/>
            <person name="Tanaka Y."/>
            <person name="Shaulsky G."/>
            <person name="Schleicher M."/>
            <person name="Weinstock G.M."/>
            <person name="Rosenthal A."/>
            <person name="Cox E.C."/>
            <person name="Chisholm R.L."/>
            <person name="Gibbs R.A."/>
            <person name="Loomis W.F."/>
            <person name="Platzer M."/>
            <person name="Kay R.R."/>
            <person name="Williams J.G."/>
            <person name="Dear P.H."/>
            <person name="Noegel A.A."/>
            <person name="Barrell B.G."/>
            <person name="Kuspa A."/>
        </authorList>
    </citation>
    <scope>NUCLEOTIDE SEQUENCE [LARGE SCALE GENOMIC DNA]</scope>
    <scope>ALTERNATIVE SPLICING</scope>
    <source>
        <strain>AX4</strain>
    </source>
</reference>
<reference key="3">
    <citation type="journal article" date="2006" name="J. Proteome Res.">
        <title>Identification of novel centrosomal proteins in Dictyostelium discoideum by comparative proteomic approaches.</title>
        <authorList>
            <person name="Reinders Y."/>
            <person name="Schulz I."/>
            <person name="Graef R."/>
            <person name="Sickmann A."/>
        </authorList>
    </citation>
    <scope>IDENTIFICATION BY MASS SPECTROMETRY [LARGE SCALE ANALYSIS]</scope>
</reference>
<reference key="4">
    <citation type="journal article" date="2006" name="Mol. Cell. Proteomics">
        <title>Proteomics fingerprinting of phagosome maturation and evidence for the role of a Galpha during uptake.</title>
        <authorList>
            <person name="Gotthardt D."/>
            <person name="Blancheteau V."/>
            <person name="Bosserhoff A."/>
            <person name="Ruppert T."/>
            <person name="Delorenzi M."/>
            <person name="Soldati T."/>
        </authorList>
    </citation>
    <scope>IDENTIFICATION BY MASS SPECTROMETRY [LARGE SCALE ANALYSIS]</scope>
    <source>
        <strain>AX2</strain>
    </source>
</reference>
<organism>
    <name type="scientific">Dictyostelium discoideum</name>
    <name type="common">Social amoeba</name>
    <dbReference type="NCBI Taxonomy" id="44689"/>
    <lineage>
        <taxon>Eukaryota</taxon>
        <taxon>Amoebozoa</taxon>
        <taxon>Evosea</taxon>
        <taxon>Eumycetozoa</taxon>
        <taxon>Dictyostelia</taxon>
        <taxon>Dictyosteliales</taxon>
        <taxon>Dictyosteliaceae</taxon>
        <taxon>Dictyostelium</taxon>
    </lineage>
</organism>
<protein>
    <recommendedName>
        <fullName>4-hydroxyphenylpyruvate dioxygenase</fullName>
        <ecNumber>1.13.11.27</ecNumber>
    </recommendedName>
    <alternativeName>
        <fullName>4-hydroxyphenylpyruvic acid oxidase</fullName>
        <shortName>4HPPD</shortName>
        <shortName>HPD</shortName>
        <shortName>HPPDase</shortName>
    </alternativeName>
</protein>
<dbReference type="EC" id="1.13.11.27"/>
<dbReference type="EMBL" id="AAFI02000020">
    <property type="protein sequence ID" value="EAL68718.1"/>
    <property type="molecule type" value="Genomic_DNA"/>
</dbReference>
<dbReference type="EMBL" id="AAFI02000020">
    <property type="protein sequence ID" value="EAS66903.1"/>
    <property type="molecule type" value="Genomic_DNA"/>
</dbReference>
<dbReference type="RefSeq" id="XP_001134587.1">
    <property type="nucleotide sequence ID" value="XM_001134587.1"/>
</dbReference>
<dbReference type="RefSeq" id="XP_642615.1">
    <property type="nucleotide sequence ID" value="XM_637523.1"/>
</dbReference>
<dbReference type="SMR" id="Q76NV5"/>
<dbReference type="FunCoup" id="Q76NV5">
    <property type="interactions" value="125"/>
</dbReference>
<dbReference type="STRING" id="44689.Q76NV5"/>
<dbReference type="PaxDb" id="44689-DDB0231603"/>
<dbReference type="EnsemblProtists" id="EAL68718">
    <property type="protein sequence ID" value="EAL68718"/>
    <property type="gene ID" value="DDB_G0277511"/>
</dbReference>
<dbReference type="EnsemblProtists" id="EAS66903">
    <property type="protein sequence ID" value="EAS66903"/>
    <property type="gene ID" value="DDB_G0277511"/>
</dbReference>
<dbReference type="GeneID" id="8621032"/>
<dbReference type="KEGG" id="ddi:DDB_G0277511"/>
<dbReference type="dictyBase" id="DDB_G0277511">
    <property type="gene designation" value="hpd"/>
</dbReference>
<dbReference type="VEuPathDB" id="AmoebaDB:DDB_G0277511"/>
<dbReference type="eggNOG" id="KOG0638">
    <property type="taxonomic scope" value="Eukaryota"/>
</dbReference>
<dbReference type="HOGENOM" id="CLU_034004_3_1_1"/>
<dbReference type="InParanoid" id="Q76NV5"/>
<dbReference type="OMA" id="DPFPVKG"/>
<dbReference type="PhylomeDB" id="Q76NV5"/>
<dbReference type="Reactome" id="R-DDI-2142789">
    <property type="pathway name" value="Ubiquinol biosynthesis"/>
</dbReference>
<dbReference type="Reactome" id="R-DDI-8963684">
    <property type="pathway name" value="Tyrosine catabolism"/>
</dbReference>
<dbReference type="UniPathway" id="UPA00139">
    <property type="reaction ID" value="UER00362"/>
</dbReference>
<dbReference type="PRO" id="PR:Q76NV5"/>
<dbReference type="Proteomes" id="UP000002195">
    <property type="component" value="Chromosome 2"/>
</dbReference>
<dbReference type="GO" id="GO:0045335">
    <property type="term" value="C:phagocytic vesicle"/>
    <property type="evidence" value="ECO:0007005"/>
    <property type="project" value="dictyBase"/>
</dbReference>
<dbReference type="GO" id="GO:0003868">
    <property type="term" value="F:4-hydroxyphenylpyruvate dioxygenase activity"/>
    <property type="evidence" value="ECO:0000250"/>
    <property type="project" value="UniProtKB"/>
</dbReference>
<dbReference type="GO" id="GO:0046872">
    <property type="term" value="F:metal ion binding"/>
    <property type="evidence" value="ECO:0007669"/>
    <property type="project" value="UniProtKB-KW"/>
</dbReference>
<dbReference type="GO" id="GO:0006559">
    <property type="term" value="P:L-phenylalanine catabolic process"/>
    <property type="evidence" value="ECO:0007669"/>
    <property type="project" value="UniProtKB-UniPathway"/>
</dbReference>
<dbReference type="GO" id="GO:0006572">
    <property type="term" value="P:tyrosine catabolic process"/>
    <property type="evidence" value="ECO:0000250"/>
    <property type="project" value="UniProtKB"/>
</dbReference>
<dbReference type="CDD" id="cd07250">
    <property type="entry name" value="HPPD_C_like"/>
    <property type="match status" value="1"/>
</dbReference>
<dbReference type="CDD" id="cd08342">
    <property type="entry name" value="HPPD_N_like"/>
    <property type="match status" value="1"/>
</dbReference>
<dbReference type="FunFam" id="3.10.180.10:FF:000001">
    <property type="entry name" value="4-hydroxyphenylpyruvate dioxygenase"/>
    <property type="match status" value="1"/>
</dbReference>
<dbReference type="Gene3D" id="3.10.180.10">
    <property type="entry name" value="2,3-Dihydroxybiphenyl 1,2-Dioxygenase, domain 1"/>
    <property type="match status" value="2"/>
</dbReference>
<dbReference type="InterPro" id="IPR005956">
    <property type="entry name" value="4OHPhenylPyrv_dOase"/>
</dbReference>
<dbReference type="InterPro" id="IPR041735">
    <property type="entry name" value="4OHPhenylPyrv_dOase_C"/>
</dbReference>
<dbReference type="InterPro" id="IPR041736">
    <property type="entry name" value="4OHPhenylPyrv_dOase_N"/>
</dbReference>
<dbReference type="InterPro" id="IPR029068">
    <property type="entry name" value="Glyas_Bleomycin-R_OHBP_Dase"/>
</dbReference>
<dbReference type="InterPro" id="IPR004360">
    <property type="entry name" value="Glyas_Fos-R_dOase_dom"/>
</dbReference>
<dbReference type="InterPro" id="IPR037523">
    <property type="entry name" value="VOC"/>
</dbReference>
<dbReference type="NCBIfam" id="TIGR01263">
    <property type="entry name" value="4HPPD"/>
    <property type="match status" value="1"/>
</dbReference>
<dbReference type="PANTHER" id="PTHR11959">
    <property type="entry name" value="4-HYDROXYPHENYLPYRUVATE DIOXYGENASE"/>
    <property type="match status" value="1"/>
</dbReference>
<dbReference type="PANTHER" id="PTHR11959:SF1">
    <property type="entry name" value="4-HYDROXYPHENYLPYRUVATE DIOXYGENASE"/>
    <property type="match status" value="1"/>
</dbReference>
<dbReference type="Pfam" id="PF00903">
    <property type="entry name" value="Glyoxalase"/>
    <property type="match status" value="2"/>
</dbReference>
<dbReference type="PIRSF" id="PIRSF009283">
    <property type="entry name" value="HPP_dOase"/>
    <property type="match status" value="1"/>
</dbReference>
<dbReference type="SUPFAM" id="SSF54593">
    <property type="entry name" value="Glyoxalase/Bleomycin resistance protein/Dihydroxybiphenyl dioxygenase"/>
    <property type="match status" value="1"/>
</dbReference>
<dbReference type="PROSITE" id="PS51819">
    <property type="entry name" value="VOC"/>
    <property type="match status" value="2"/>
</dbReference>
<sequence>MEGFDHVTFWVGNALQAATYYIARFGFQNLAYSGLETGNRQFATHVIHQNNIIMAFTSPLTGDNKDYADHMMRHGDGVKDIAFNVKDVQHIYDEAVKAGAQSVKEPHQIKDEHGIVTLATIMSPYGETTHTFVDRSQYKGAFLPGFTYKVASDPLSNITEPVGLNLIDHVVSNHADKMMEPVVQWYEKVLQFHRFWSVDDKTIHTEYSSLRSVVVADKSEKVKLPINEPANGIRKSQIQEYVDFYNGAGVQHIALKTDNIIDAISKLRSRGVSFLTVPKTYYTSLREKLQHSSLEIKEDLDTLEKLHILIDYDDKGYLLQIFTNNVEDKPTVFFEIIQRNNHDGFGAGNFKSLFEAIERQQETRGNL</sequence>
<evidence type="ECO:0000250" key="1"/>
<evidence type="ECO:0000255" key="2">
    <source>
        <dbReference type="PROSITE-ProRule" id="PRU01163"/>
    </source>
</evidence>
<evidence type="ECO:0000305" key="3"/>
<proteinExistence type="evidence at protein level"/>